<name>RPO12_PYRAR</name>
<protein>
    <recommendedName>
        <fullName evidence="1">DNA-directed RNA polymerase subunit Rpo12</fullName>
        <ecNumber evidence="1">2.7.7.6</ecNumber>
    </recommendedName>
    <alternativeName>
        <fullName evidence="1">DNA-directed RNA polymerase subunit P</fullName>
    </alternativeName>
</protein>
<comment type="function">
    <text evidence="1">DNA-dependent RNA polymerase (RNAP) catalyzes the transcription of DNA into RNA using the four ribonucleoside triphosphates as substrates.</text>
</comment>
<comment type="catalytic activity">
    <reaction evidence="1">
        <text>RNA(n) + a ribonucleoside 5'-triphosphate = RNA(n+1) + diphosphate</text>
        <dbReference type="Rhea" id="RHEA:21248"/>
        <dbReference type="Rhea" id="RHEA-COMP:14527"/>
        <dbReference type="Rhea" id="RHEA-COMP:17342"/>
        <dbReference type="ChEBI" id="CHEBI:33019"/>
        <dbReference type="ChEBI" id="CHEBI:61557"/>
        <dbReference type="ChEBI" id="CHEBI:140395"/>
        <dbReference type="EC" id="2.7.7.6"/>
    </reaction>
</comment>
<comment type="cofactor">
    <cofactor evidence="1">
        <name>Zn(2+)</name>
        <dbReference type="ChEBI" id="CHEBI:29105"/>
    </cofactor>
    <text evidence="1">Binds 1 zinc ion.</text>
</comment>
<comment type="subunit">
    <text evidence="1">Part of the RNA polymerase complex.</text>
</comment>
<comment type="subcellular location">
    <subcellularLocation>
        <location evidence="1">Cytoplasm</location>
    </subcellularLocation>
</comment>
<comment type="similarity">
    <text evidence="1">Belongs to the archaeal Rpo12/eukaryotic RPC10 RNA polymerase subunit family.</text>
</comment>
<accession>A4WLV9</accession>
<reference key="1">
    <citation type="submission" date="2007-04" db="EMBL/GenBank/DDBJ databases">
        <title>Complete sequence of Pyrobaculum arsenaticum DSM 13514.</title>
        <authorList>
            <consortium name="US DOE Joint Genome Institute"/>
            <person name="Copeland A."/>
            <person name="Lucas S."/>
            <person name="Lapidus A."/>
            <person name="Barry K."/>
            <person name="Glavina del Rio T."/>
            <person name="Dalin E."/>
            <person name="Tice H."/>
            <person name="Pitluck S."/>
            <person name="Chain P."/>
            <person name="Malfatti S."/>
            <person name="Shin M."/>
            <person name="Vergez L."/>
            <person name="Schmutz J."/>
            <person name="Larimer F."/>
            <person name="Land M."/>
            <person name="Hauser L."/>
            <person name="Kyrpides N."/>
            <person name="Mikhailova N."/>
            <person name="Cozen A.E."/>
            <person name="Fitz-Gibbon S.T."/>
            <person name="House C.H."/>
            <person name="Saltikov C."/>
            <person name="Lowe T.M."/>
            <person name="Richardson P."/>
        </authorList>
    </citation>
    <scope>NUCLEOTIDE SEQUENCE [LARGE SCALE GENOMIC DNA]</scope>
    <source>
        <strain>ATCC 700994 / DSM 13514 / JCM 11321 / PZ6</strain>
    </source>
</reference>
<dbReference type="EC" id="2.7.7.6" evidence="1"/>
<dbReference type="EMBL" id="CP000660">
    <property type="protein sequence ID" value="ABP51376.1"/>
    <property type="molecule type" value="Genomic_DNA"/>
</dbReference>
<dbReference type="SMR" id="A4WLV9"/>
<dbReference type="STRING" id="340102.Pars_1825"/>
<dbReference type="KEGG" id="pas:Pars_1825"/>
<dbReference type="HOGENOM" id="CLU_179456_2_0_2"/>
<dbReference type="OrthoDB" id="129238at2157"/>
<dbReference type="PhylomeDB" id="A4WLV9"/>
<dbReference type="Proteomes" id="UP000001567">
    <property type="component" value="Chromosome"/>
</dbReference>
<dbReference type="GO" id="GO:0005737">
    <property type="term" value="C:cytoplasm"/>
    <property type="evidence" value="ECO:0007669"/>
    <property type="project" value="UniProtKB-SubCell"/>
</dbReference>
<dbReference type="GO" id="GO:0000428">
    <property type="term" value="C:DNA-directed RNA polymerase complex"/>
    <property type="evidence" value="ECO:0007669"/>
    <property type="project" value="UniProtKB-KW"/>
</dbReference>
<dbReference type="GO" id="GO:0003677">
    <property type="term" value="F:DNA binding"/>
    <property type="evidence" value="ECO:0007669"/>
    <property type="project" value="InterPro"/>
</dbReference>
<dbReference type="GO" id="GO:0003899">
    <property type="term" value="F:DNA-directed RNA polymerase activity"/>
    <property type="evidence" value="ECO:0007669"/>
    <property type="project" value="UniProtKB-UniRule"/>
</dbReference>
<dbReference type="GO" id="GO:0008270">
    <property type="term" value="F:zinc ion binding"/>
    <property type="evidence" value="ECO:0007669"/>
    <property type="project" value="UniProtKB-UniRule"/>
</dbReference>
<dbReference type="GO" id="GO:0006351">
    <property type="term" value="P:DNA-templated transcription"/>
    <property type="evidence" value="ECO:0007669"/>
    <property type="project" value="UniProtKB-UniRule"/>
</dbReference>
<dbReference type="Gene3D" id="2.20.28.30">
    <property type="entry name" value="RNA polymerase ii, chain L"/>
    <property type="match status" value="1"/>
</dbReference>
<dbReference type="HAMAP" id="MF_00615">
    <property type="entry name" value="RNApol_arch_Rpo12"/>
    <property type="match status" value="1"/>
</dbReference>
<dbReference type="InterPro" id="IPR006591">
    <property type="entry name" value="RNAP_P/RPABC4"/>
</dbReference>
<dbReference type="InterPro" id="IPR029040">
    <property type="entry name" value="RPABC4/Spt4"/>
</dbReference>
<dbReference type="InterPro" id="IPR023464">
    <property type="entry name" value="Rpo12"/>
</dbReference>
<dbReference type="SMART" id="SM00659">
    <property type="entry name" value="RPOLCX"/>
    <property type="match status" value="1"/>
</dbReference>
<dbReference type="SUPFAM" id="SSF63393">
    <property type="entry name" value="RNA polymerase subunits"/>
    <property type="match status" value="1"/>
</dbReference>
<evidence type="ECO:0000255" key="1">
    <source>
        <dbReference type="HAMAP-Rule" id="MF_00615"/>
    </source>
</evidence>
<organism>
    <name type="scientific">Pyrobaculum arsenaticum (strain DSM 13514 / JCM 11321 / PZ6)</name>
    <dbReference type="NCBI Taxonomy" id="340102"/>
    <lineage>
        <taxon>Archaea</taxon>
        <taxon>Thermoproteota</taxon>
        <taxon>Thermoprotei</taxon>
        <taxon>Thermoproteales</taxon>
        <taxon>Thermoproteaceae</taxon>
        <taxon>Pyrobaculum</taxon>
    </lineage>
</organism>
<gene>
    <name evidence="1" type="primary">rpo12</name>
    <name evidence="1" type="synonym">rpoP</name>
    <name type="ordered locus">Pars_1825</name>
</gene>
<sequence>MVEERKLYICMRCGRTFSRSEMEILPGIRCPYCNFKIIMKVRSPTVKRIPAV</sequence>
<proteinExistence type="inferred from homology"/>
<feature type="chain" id="PRO_1000061341" description="DNA-directed RNA polymerase subunit Rpo12">
    <location>
        <begin position="1"/>
        <end position="52"/>
    </location>
</feature>
<feature type="binding site" evidence="1">
    <location>
        <position position="13"/>
    </location>
    <ligand>
        <name>Zn(2+)</name>
        <dbReference type="ChEBI" id="CHEBI:29105"/>
    </ligand>
</feature>
<feature type="binding site" evidence="1">
    <location>
        <position position="30"/>
    </location>
    <ligand>
        <name>Zn(2+)</name>
        <dbReference type="ChEBI" id="CHEBI:29105"/>
    </ligand>
</feature>
<feature type="binding site" evidence="1">
    <location>
        <position position="33"/>
    </location>
    <ligand>
        <name>Zn(2+)</name>
        <dbReference type="ChEBI" id="CHEBI:29105"/>
    </ligand>
</feature>
<keyword id="KW-0963">Cytoplasm</keyword>
<keyword id="KW-0240">DNA-directed RNA polymerase</keyword>
<keyword id="KW-0479">Metal-binding</keyword>
<keyword id="KW-0548">Nucleotidyltransferase</keyword>
<keyword id="KW-0804">Transcription</keyword>
<keyword id="KW-0808">Transferase</keyword>
<keyword id="KW-0862">Zinc</keyword>